<dbReference type="EC" id="4.3.3.7" evidence="1"/>
<dbReference type="EMBL" id="BX571663">
    <property type="protein sequence ID" value="CAE11209.1"/>
    <property type="molecule type" value="Genomic_DNA"/>
</dbReference>
<dbReference type="RefSeq" id="WP_011139991.1">
    <property type="nucleotide sequence ID" value="NC_005090.1"/>
</dbReference>
<dbReference type="SMR" id="Q7M7L6"/>
<dbReference type="STRING" id="273121.WS2221"/>
<dbReference type="KEGG" id="wsu:WS2221"/>
<dbReference type="eggNOG" id="COG0329">
    <property type="taxonomic scope" value="Bacteria"/>
</dbReference>
<dbReference type="HOGENOM" id="CLU_049343_7_0_7"/>
<dbReference type="UniPathway" id="UPA00034">
    <property type="reaction ID" value="UER00017"/>
</dbReference>
<dbReference type="Proteomes" id="UP000000422">
    <property type="component" value="Chromosome"/>
</dbReference>
<dbReference type="GO" id="GO:0005829">
    <property type="term" value="C:cytosol"/>
    <property type="evidence" value="ECO:0007669"/>
    <property type="project" value="TreeGrafter"/>
</dbReference>
<dbReference type="GO" id="GO:0008840">
    <property type="term" value="F:4-hydroxy-tetrahydrodipicolinate synthase activity"/>
    <property type="evidence" value="ECO:0007669"/>
    <property type="project" value="UniProtKB-UniRule"/>
</dbReference>
<dbReference type="GO" id="GO:0019877">
    <property type="term" value="P:diaminopimelate biosynthetic process"/>
    <property type="evidence" value="ECO:0007669"/>
    <property type="project" value="UniProtKB-UniRule"/>
</dbReference>
<dbReference type="GO" id="GO:0009089">
    <property type="term" value="P:lysine biosynthetic process via diaminopimelate"/>
    <property type="evidence" value="ECO:0007669"/>
    <property type="project" value="UniProtKB-UniRule"/>
</dbReference>
<dbReference type="CDD" id="cd00950">
    <property type="entry name" value="DHDPS"/>
    <property type="match status" value="1"/>
</dbReference>
<dbReference type="Gene3D" id="3.20.20.70">
    <property type="entry name" value="Aldolase class I"/>
    <property type="match status" value="1"/>
</dbReference>
<dbReference type="HAMAP" id="MF_00418">
    <property type="entry name" value="DapA"/>
    <property type="match status" value="1"/>
</dbReference>
<dbReference type="InterPro" id="IPR013785">
    <property type="entry name" value="Aldolase_TIM"/>
</dbReference>
<dbReference type="InterPro" id="IPR005263">
    <property type="entry name" value="DapA"/>
</dbReference>
<dbReference type="InterPro" id="IPR002220">
    <property type="entry name" value="DapA-like"/>
</dbReference>
<dbReference type="InterPro" id="IPR020625">
    <property type="entry name" value="Schiff_base-form_aldolases_AS"/>
</dbReference>
<dbReference type="InterPro" id="IPR020624">
    <property type="entry name" value="Schiff_base-form_aldolases_CS"/>
</dbReference>
<dbReference type="NCBIfam" id="TIGR00674">
    <property type="entry name" value="dapA"/>
    <property type="match status" value="1"/>
</dbReference>
<dbReference type="PANTHER" id="PTHR12128:SF66">
    <property type="entry name" value="4-HYDROXY-2-OXOGLUTARATE ALDOLASE, MITOCHONDRIAL"/>
    <property type="match status" value="1"/>
</dbReference>
<dbReference type="PANTHER" id="PTHR12128">
    <property type="entry name" value="DIHYDRODIPICOLINATE SYNTHASE"/>
    <property type="match status" value="1"/>
</dbReference>
<dbReference type="Pfam" id="PF00701">
    <property type="entry name" value="DHDPS"/>
    <property type="match status" value="1"/>
</dbReference>
<dbReference type="PIRSF" id="PIRSF001365">
    <property type="entry name" value="DHDPS"/>
    <property type="match status" value="1"/>
</dbReference>
<dbReference type="PRINTS" id="PR00146">
    <property type="entry name" value="DHPICSNTHASE"/>
</dbReference>
<dbReference type="SMART" id="SM01130">
    <property type="entry name" value="DHDPS"/>
    <property type="match status" value="1"/>
</dbReference>
<dbReference type="SUPFAM" id="SSF51569">
    <property type="entry name" value="Aldolase"/>
    <property type="match status" value="1"/>
</dbReference>
<dbReference type="PROSITE" id="PS00665">
    <property type="entry name" value="DHDPS_1"/>
    <property type="match status" value="1"/>
</dbReference>
<dbReference type="PROSITE" id="PS00666">
    <property type="entry name" value="DHDPS_2"/>
    <property type="match status" value="1"/>
</dbReference>
<evidence type="ECO:0000255" key="1">
    <source>
        <dbReference type="HAMAP-Rule" id="MF_00418"/>
    </source>
</evidence>
<evidence type="ECO:0000305" key="2"/>
<keyword id="KW-0028">Amino-acid biosynthesis</keyword>
<keyword id="KW-0963">Cytoplasm</keyword>
<keyword id="KW-0220">Diaminopimelate biosynthesis</keyword>
<keyword id="KW-0456">Lyase</keyword>
<keyword id="KW-0457">Lysine biosynthesis</keyword>
<keyword id="KW-1185">Reference proteome</keyword>
<keyword id="KW-0704">Schiff base</keyword>
<comment type="function">
    <text evidence="1">Catalyzes the condensation of (S)-aspartate-beta-semialdehyde [(S)-ASA] and pyruvate to 4-hydroxy-tetrahydrodipicolinate (HTPA).</text>
</comment>
<comment type="catalytic activity">
    <reaction evidence="1">
        <text>L-aspartate 4-semialdehyde + pyruvate = (2S,4S)-4-hydroxy-2,3,4,5-tetrahydrodipicolinate + H2O + H(+)</text>
        <dbReference type="Rhea" id="RHEA:34171"/>
        <dbReference type="ChEBI" id="CHEBI:15361"/>
        <dbReference type="ChEBI" id="CHEBI:15377"/>
        <dbReference type="ChEBI" id="CHEBI:15378"/>
        <dbReference type="ChEBI" id="CHEBI:67139"/>
        <dbReference type="ChEBI" id="CHEBI:537519"/>
        <dbReference type="EC" id="4.3.3.7"/>
    </reaction>
</comment>
<comment type="pathway">
    <text evidence="1">Amino-acid biosynthesis; L-lysine biosynthesis via DAP pathway; (S)-tetrahydrodipicolinate from L-aspartate: step 3/4.</text>
</comment>
<comment type="subunit">
    <text evidence="1">Homotetramer; dimer of dimers.</text>
</comment>
<comment type="subcellular location">
    <subcellularLocation>
        <location evidence="1">Cytoplasm</location>
    </subcellularLocation>
</comment>
<comment type="similarity">
    <text evidence="1">Belongs to the DapA family.</text>
</comment>
<comment type="caution">
    <text evidence="2">Was originally thought to be a dihydrodipicolinate synthase (DHDPS), catalyzing the condensation of (S)-aspartate-beta-semialdehyde [(S)-ASA] and pyruvate to dihydrodipicolinate (DHDP). However, it was shown in E.coli that the product of the enzymatic reaction is not dihydrodipicolinate but in fact (4S)-4-hydroxy-2,3,4,5-tetrahydro-(2S)-dipicolinic acid (HTPA), and that the consecutive dehydration reaction leading to DHDP is not spontaneous but catalyzed by DapB.</text>
</comment>
<organism>
    <name type="scientific">Wolinella succinogenes (strain ATCC 29543 / DSM 1740 / CCUG 13145 / JCM 31913 / LMG 7466 / NCTC 11488 / FDC 602W)</name>
    <name type="common">Vibrio succinogenes</name>
    <dbReference type="NCBI Taxonomy" id="273121"/>
    <lineage>
        <taxon>Bacteria</taxon>
        <taxon>Pseudomonadati</taxon>
        <taxon>Campylobacterota</taxon>
        <taxon>Epsilonproteobacteria</taxon>
        <taxon>Campylobacterales</taxon>
        <taxon>Helicobacteraceae</taxon>
        <taxon>Wolinella</taxon>
    </lineage>
</organism>
<name>DAPA_WOLSU</name>
<reference key="1">
    <citation type="journal article" date="2003" name="Proc. Natl. Acad. Sci. U.S.A.">
        <title>Complete genome sequence and analysis of Wolinella succinogenes.</title>
        <authorList>
            <person name="Baar C."/>
            <person name="Eppinger M."/>
            <person name="Raddatz G."/>
            <person name="Simon J."/>
            <person name="Lanz C."/>
            <person name="Klimmek O."/>
            <person name="Nandakumar R."/>
            <person name="Gross R."/>
            <person name="Rosinus A."/>
            <person name="Keller H."/>
            <person name="Jagtap P."/>
            <person name="Linke B."/>
            <person name="Meyer F."/>
            <person name="Lederer H."/>
            <person name="Schuster S.C."/>
        </authorList>
    </citation>
    <scope>NUCLEOTIDE SEQUENCE [LARGE SCALE GENOMIC DNA]</scope>
    <source>
        <strain>ATCC 29543 / DSM 1740 / CCUG 13145 / JCM 31913 / LMG 7466 / NCTC 11488 / FDC 602W</strain>
    </source>
</reference>
<protein>
    <recommendedName>
        <fullName evidence="1">4-hydroxy-tetrahydrodipicolinate synthase</fullName>
        <shortName evidence="1">HTPA synthase</shortName>
        <ecNumber evidence="1">4.3.3.7</ecNumber>
    </recommendedName>
</protein>
<proteinExistence type="inferred from homology"/>
<accession>Q7M7L6</accession>
<feature type="chain" id="PRO_0000103185" description="4-hydroxy-tetrahydrodipicolinate synthase">
    <location>
        <begin position="1"/>
        <end position="295"/>
    </location>
</feature>
<feature type="active site" description="Proton donor/acceptor" evidence="1">
    <location>
        <position position="135"/>
    </location>
</feature>
<feature type="active site" description="Schiff-base intermediate with substrate" evidence="1">
    <location>
        <position position="164"/>
    </location>
</feature>
<feature type="binding site" evidence="1">
    <location>
        <position position="46"/>
    </location>
    <ligand>
        <name>pyruvate</name>
        <dbReference type="ChEBI" id="CHEBI:15361"/>
    </ligand>
</feature>
<feature type="binding site" evidence="1">
    <location>
        <position position="205"/>
    </location>
    <ligand>
        <name>pyruvate</name>
        <dbReference type="ChEBI" id="CHEBI:15361"/>
    </ligand>
</feature>
<feature type="site" description="Part of a proton relay during catalysis" evidence="1">
    <location>
        <position position="45"/>
    </location>
</feature>
<feature type="site" description="Part of a proton relay during catalysis" evidence="1">
    <location>
        <position position="109"/>
    </location>
</feature>
<sequence length="295" mass="32194">MNTVTGAMSALITPFRNGRLDTETYEKLIQRQIRHGMDALVPVGTTGESATLSHSEHKECIEIAVKVCQGTGIKVLAGAGSNSTLEAIDLAKFAEKMGADGILCVTPYYNKPSQEGLFQHYKAVAESVGIPLMLYNVPGRTGVNLETCTIQRLFNEVKNIYGIKEASGSMERIVELNTKIPDFAILSGEDAINYPVLANHGVGVISVIGNLLPDKISALVHKALQGELDESRRINNSLYKINKALFVESNPIPIKAAMYLAGLTPTLEYRLPLVSPSQENMRMIEETLKDYEVKA</sequence>
<gene>
    <name evidence="1" type="primary">dapA</name>
    <name type="ordered locus">WS2221</name>
</gene>